<gene>
    <name type="primary">Amyrel</name>
    <name type="ORF">GA20907</name>
</gene>
<name>AMYR_DROPS</name>
<reference key="1">
    <citation type="journal article" date="1998" name="Proc. Natl. Acad. Sci. U.S.A.">
        <title>Amyrel, a paralogous gene of the amylase gene family in Drosophila melanogaster and the Sophophora subgenus.</title>
        <authorList>
            <person name="Da Lage J.-L."/>
            <person name="Renard E."/>
            <person name="Chartois F."/>
            <person name="Lemeunier F."/>
            <person name="Cariou M.-L."/>
        </authorList>
    </citation>
    <scope>NUCLEOTIDE SEQUENCE [GENOMIC DNA]</scope>
    <source>
        <strain>Phoenix</strain>
    </source>
</reference>
<reference key="2">
    <citation type="submission" date="2000-01" db="EMBL/GenBank/DDBJ databases">
        <authorList>
            <person name="Da Lage J.-L."/>
        </authorList>
    </citation>
    <scope>SEQUENCE REVISION</scope>
</reference>
<reference key="3">
    <citation type="journal article" date="2005" name="Genome Res.">
        <title>Comparative genome sequencing of Drosophila pseudoobscura: chromosomal, gene, and cis-element evolution.</title>
        <authorList>
            <person name="Richards S."/>
            <person name="Liu Y."/>
            <person name="Bettencourt B.R."/>
            <person name="Hradecky P."/>
            <person name="Letovsky S."/>
            <person name="Nielsen R."/>
            <person name="Thornton K."/>
            <person name="Hubisz M.J."/>
            <person name="Chen R."/>
            <person name="Meisel R.P."/>
            <person name="Couronne O."/>
            <person name="Hua S."/>
            <person name="Smith M.A."/>
            <person name="Zhang P."/>
            <person name="Liu J."/>
            <person name="Bussemaker H.J."/>
            <person name="van Batenburg M.F."/>
            <person name="Howells S.L."/>
            <person name="Scherer S.E."/>
            <person name="Sodergren E."/>
            <person name="Matthews B.B."/>
            <person name="Crosby M.A."/>
            <person name="Schroeder A.J."/>
            <person name="Ortiz-Barrientos D."/>
            <person name="Rives C.M."/>
            <person name="Metzker M.L."/>
            <person name="Muzny D.M."/>
            <person name="Scott G."/>
            <person name="Steffen D."/>
            <person name="Wheeler D.A."/>
            <person name="Worley K.C."/>
            <person name="Havlak P."/>
            <person name="Durbin K.J."/>
            <person name="Egan A."/>
            <person name="Gill R."/>
            <person name="Hume J."/>
            <person name="Morgan M.B."/>
            <person name="Miner G."/>
            <person name="Hamilton C."/>
            <person name="Huang Y."/>
            <person name="Waldron L."/>
            <person name="Verduzco D."/>
            <person name="Clerc-Blankenburg K.P."/>
            <person name="Dubchak I."/>
            <person name="Noor M.A.F."/>
            <person name="Anderson W."/>
            <person name="White K.P."/>
            <person name="Clark A.G."/>
            <person name="Schaeffer S.W."/>
            <person name="Gelbart W.M."/>
            <person name="Weinstock G.M."/>
            <person name="Gibbs R.A."/>
        </authorList>
    </citation>
    <scope>NUCLEOTIDE SEQUENCE [LARGE SCALE GENOMIC DNA]</scope>
    <source>
        <strain>MV2-25 / Tucson 14011-0121.94</strain>
    </source>
</reference>
<proteinExistence type="inferred from homology"/>
<sequence>MFKFTFALALCVLAAGLVLAQHNPHWWGNRNTIVHLFEWKWEDIAEECENFLGPRGFAGVQVSPANENIVSPGRPWWERYQPISYKLITRSGNEEQFADMVRRCNEVGVRIYVDVLLNHMSADFVGQAVGTAGTEADPAVKSFPGVPYSAEDFHPSCEIYDWNDRYQIQHCELVGLKDLDQSRDWVRTKLIEFLDHLIELGVAGFRVDAAKHMASEDLEFIYGSLSDLKIEHGFPHSSRPFIFQEVIDHGGQEVTREEYNSLGAVTEFRFSQEIGNAFRGNNALKWLQSWGTDWGFLSSGQALTFVDNHDNQRDGGAVLTYKSPRQYKMATAFHLAYPYGISRVMSSFAFDDHDSAPPQDAQEELISPEFDADGGCANGWICEHRWRQIYNMVGFKNAVRDTEISNWWDNGDSQIAFCRGSKGFIAFNNNMYNLAEVLQTCLPKGVYCDVISGDLINGSCSGKSVYVGDDGLGFVSIDSDDFDGVLAIHVDARI</sequence>
<comment type="catalytic activity">
    <reaction evidence="2">
        <text>Endohydrolysis of (1-&gt;4)-alpha-D-glucosidic linkages in polysaccharides containing three or more (1-&gt;4)-alpha-linked D-glucose units.</text>
        <dbReference type="EC" id="3.2.1.1"/>
    </reaction>
</comment>
<comment type="cofactor">
    <cofactor evidence="3">
        <name>Ca(2+)</name>
        <dbReference type="ChEBI" id="CHEBI:29108"/>
    </cofactor>
    <text evidence="3">Binds 1 Ca(2+) ion per subunit.</text>
</comment>
<comment type="cofactor">
    <cofactor evidence="3">
        <name>chloride</name>
        <dbReference type="ChEBI" id="CHEBI:17996"/>
    </cofactor>
    <text evidence="3">Binds 1 Cl(-) ion per subunit.</text>
</comment>
<comment type="subunit">
    <text evidence="1">Monomer.</text>
</comment>
<comment type="subcellular location">
    <subcellularLocation>
        <location evidence="5">Secreted</location>
    </subcellularLocation>
</comment>
<comment type="similarity">
    <text evidence="5">Belongs to the glycosyl hydrolase 13 family.</text>
</comment>
<comment type="sequence caution" evidence="5">
    <conflict type="erroneous gene model prediction">
        <sequence resource="EMBL-CDS" id="EAL26626"/>
    </conflict>
</comment>
<dbReference type="EC" id="3.2.1.1" evidence="2"/>
<dbReference type="EMBL" id="U82556">
    <property type="protein sequence ID" value="AAC48346.3"/>
    <property type="molecule type" value="Genomic_DNA"/>
</dbReference>
<dbReference type="EMBL" id="CM000071">
    <property type="protein sequence ID" value="EAL26626.1"/>
    <property type="status" value="ALT_SEQ"/>
    <property type="molecule type" value="Genomic_DNA"/>
</dbReference>
<dbReference type="RefSeq" id="XP_001362046.2">
    <property type="nucleotide sequence ID" value="XM_001362009.3"/>
</dbReference>
<dbReference type="SMR" id="O18552"/>
<dbReference type="FunCoup" id="O18552">
    <property type="interactions" value="101"/>
</dbReference>
<dbReference type="STRING" id="46245.O18552"/>
<dbReference type="CAZy" id="GH13">
    <property type="family name" value="Glycoside Hydrolase Family 13"/>
</dbReference>
<dbReference type="GeneID" id="4805687"/>
<dbReference type="KEGG" id="dpo:4805687"/>
<dbReference type="CTD" id="36863"/>
<dbReference type="eggNOG" id="KOG2212">
    <property type="taxonomic scope" value="Eukaryota"/>
</dbReference>
<dbReference type="HOGENOM" id="CLU_013336_2_1_1"/>
<dbReference type="InParanoid" id="O18552"/>
<dbReference type="OMA" id="WGNRNTI"/>
<dbReference type="PhylomeDB" id="O18552"/>
<dbReference type="Proteomes" id="UP000001819">
    <property type="component" value="Chromosome 3"/>
</dbReference>
<dbReference type="GO" id="GO:0005576">
    <property type="term" value="C:extracellular region"/>
    <property type="evidence" value="ECO:0007669"/>
    <property type="project" value="UniProtKB-SubCell"/>
</dbReference>
<dbReference type="GO" id="GO:0004556">
    <property type="term" value="F:alpha-amylase activity"/>
    <property type="evidence" value="ECO:0007669"/>
    <property type="project" value="UniProtKB-EC"/>
</dbReference>
<dbReference type="GO" id="GO:0046872">
    <property type="term" value="F:metal ion binding"/>
    <property type="evidence" value="ECO:0007669"/>
    <property type="project" value="UniProtKB-KW"/>
</dbReference>
<dbReference type="GO" id="GO:0005975">
    <property type="term" value="P:carbohydrate metabolic process"/>
    <property type="evidence" value="ECO:0007669"/>
    <property type="project" value="InterPro"/>
</dbReference>
<dbReference type="CDD" id="cd11317">
    <property type="entry name" value="AmyAc_bac_euk_AmyA"/>
    <property type="match status" value="1"/>
</dbReference>
<dbReference type="FunFam" id="3.20.20.80:FF:000119">
    <property type="entry name" value="Alpha-amylase-related protein"/>
    <property type="match status" value="1"/>
</dbReference>
<dbReference type="Gene3D" id="3.20.20.80">
    <property type="entry name" value="Glycosidases"/>
    <property type="match status" value="1"/>
</dbReference>
<dbReference type="Gene3D" id="2.60.40.1180">
    <property type="entry name" value="Golgi alpha-mannosidase II"/>
    <property type="match status" value="1"/>
</dbReference>
<dbReference type="InterPro" id="IPR006048">
    <property type="entry name" value="A-amylase/branching_C"/>
</dbReference>
<dbReference type="InterPro" id="IPR031319">
    <property type="entry name" value="A-amylase_C"/>
</dbReference>
<dbReference type="InterPro" id="IPR006046">
    <property type="entry name" value="Alpha_amylase"/>
</dbReference>
<dbReference type="InterPro" id="IPR006047">
    <property type="entry name" value="Glyco_hydro_13_cat_dom"/>
</dbReference>
<dbReference type="InterPro" id="IPR013780">
    <property type="entry name" value="Glyco_hydro_b"/>
</dbReference>
<dbReference type="InterPro" id="IPR017853">
    <property type="entry name" value="Glycoside_hydrolase_SF"/>
</dbReference>
<dbReference type="PANTHER" id="PTHR43447">
    <property type="entry name" value="ALPHA-AMYLASE"/>
    <property type="match status" value="1"/>
</dbReference>
<dbReference type="Pfam" id="PF00128">
    <property type="entry name" value="Alpha-amylase"/>
    <property type="match status" value="1"/>
</dbReference>
<dbReference type="Pfam" id="PF02806">
    <property type="entry name" value="Alpha-amylase_C"/>
    <property type="match status" value="1"/>
</dbReference>
<dbReference type="PRINTS" id="PR00110">
    <property type="entry name" value="ALPHAAMYLASE"/>
</dbReference>
<dbReference type="SMART" id="SM00642">
    <property type="entry name" value="Aamy"/>
    <property type="match status" value="1"/>
</dbReference>
<dbReference type="SMART" id="SM00632">
    <property type="entry name" value="Aamy_C"/>
    <property type="match status" value="1"/>
</dbReference>
<dbReference type="SUPFAM" id="SSF51445">
    <property type="entry name" value="(Trans)glycosidases"/>
    <property type="match status" value="1"/>
</dbReference>
<dbReference type="SUPFAM" id="SSF51011">
    <property type="entry name" value="Glycosyl hydrolase domain"/>
    <property type="match status" value="1"/>
</dbReference>
<organism>
    <name type="scientific">Drosophila pseudoobscura pseudoobscura</name>
    <name type="common">Fruit fly</name>
    <dbReference type="NCBI Taxonomy" id="46245"/>
    <lineage>
        <taxon>Eukaryota</taxon>
        <taxon>Metazoa</taxon>
        <taxon>Ecdysozoa</taxon>
        <taxon>Arthropoda</taxon>
        <taxon>Hexapoda</taxon>
        <taxon>Insecta</taxon>
        <taxon>Pterygota</taxon>
        <taxon>Neoptera</taxon>
        <taxon>Endopterygota</taxon>
        <taxon>Diptera</taxon>
        <taxon>Brachycera</taxon>
        <taxon>Muscomorpha</taxon>
        <taxon>Ephydroidea</taxon>
        <taxon>Drosophilidae</taxon>
        <taxon>Drosophila</taxon>
        <taxon>Sophophora</taxon>
    </lineage>
</organism>
<protein>
    <recommendedName>
        <fullName>Alpha-amylase-related protein</fullName>
        <ecNumber evidence="2">3.2.1.1</ecNumber>
    </recommendedName>
</protein>
<accession>O18552</accession>
<accession>Q28WP1</accession>
<evidence type="ECO:0000250" key="1"/>
<evidence type="ECO:0000250" key="2">
    <source>
        <dbReference type="UniProtKB" id="P04746"/>
    </source>
</evidence>
<evidence type="ECO:0000250" key="3">
    <source>
        <dbReference type="UniProtKB" id="P56634"/>
    </source>
</evidence>
<evidence type="ECO:0000255" key="4"/>
<evidence type="ECO:0000305" key="5"/>
<keyword id="KW-0106">Calcium</keyword>
<keyword id="KW-0119">Carbohydrate metabolism</keyword>
<keyword id="KW-0868">Chloride</keyword>
<keyword id="KW-1015">Disulfide bond</keyword>
<keyword id="KW-0326">Glycosidase</keyword>
<keyword id="KW-0378">Hydrolase</keyword>
<keyword id="KW-0479">Metal-binding</keyword>
<keyword id="KW-0873">Pyrrolidone carboxylic acid</keyword>
<keyword id="KW-1185">Reference proteome</keyword>
<keyword id="KW-0964">Secreted</keyword>
<keyword id="KW-0732">Signal</keyword>
<feature type="signal peptide" evidence="1">
    <location>
        <begin position="1"/>
        <end position="20"/>
    </location>
</feature>
<feature type="chain" id="PRO_0000001385" description="Alpha-amylase-related protein">
    <location>
        <begin position="21"/>
        <end position="494"/>
    </location>
</feature>
<feature type="active site" description="Nucleophile" evidence="2">
    <location>
        <position position="208"/>
    </location>
</feature>
<feature type="active site" description="Proton donor" evidence="2">
    <location>
        <position position="245"/>
    </location>
</feature>
<feature type="binding site" evidence="3">
    <location>
        <position position="118"/>
    </location>
    <ligand>
        <name>Ca(2+)</name>
        <dbReference type="ChEBI" id="CHEBI:29108"/>
    </ligand>
</feature>
<feature type="binding site" evidence="1">
    <location>
        <position position="169"/>
    </location>
    <ligand>
        <name>Ca(2+)</name>
        <dbReference type="ChEBI" id="CHEBI:29108"/>
    </ligand>
</feature>
<feature type="binding site" evidence="3">
    <location>
        <position position="178"/>
    </location>
    <ligand>
        <name>Ca(2+)</name>
        <dbReference type="ChEBI" id="CHEBI:29108"/>
    </ligand>
</feature>
<feature type="binding site" evidence="3">
    <location>
        <position position="206"/>
    </location>
    <ligand>
        <name>chloride</name>
        <dbReference type="ChEBI" id="CHEBI:17996"/>
    </ligand>
</feature>
<feature type="binding site" evidence="3">
    <location>
        <position position="212"/>
    </location>
    <ligand>
        <name>Ca(2+)</name>
        <dbReference type="ChEBI" id="CHEBI:29108"/>
    </ligand>
</feature>
<feature type="binding site" evidence="3">
    <location>
        <position position="308"/>
    </location>
    <ligand>
        <name>chloride</name>
        <dbReference type="ChEBI" id="CHEBI:17996"/>
    </ligand>
</feature>
<feature type="binding site" evidence="3">
    <location>
        <position position="343"/>
    </location>
    <ligand>
        <name>chloride</name>
        <dbReference type="ChEBI" id="CHEBI:17996"/>
    </ligand>
</feature>
<feature type="site" description="Transition state stabilizer" evidence="2">
    <location>
        <position position="310"/>
    </location>
</feature>
<feature type="modified residue" description="Pyrrolidone carboxylic acid" evidence="1">
    <location>
        <position position="21"/>
    </location>
</feature>
<feature type="disulfide bond" evidence="3">
    <location>
        <begin position="48"/>
        <end position="104"/>
    </location>
</feature>
<feature type="disulfide bond" evidence="3">
    <location>
        <begin position="157"/>
        <end position="171"/>
    </location>
</feature>
<feature type="disulfide bond" evidence="3">
    <location>
        <begin position="376"/>
        <end position="382"/>
    </location>
</feature>
<feature type="disulfide bond" evidence="4">
    <location>
        <begin position="418"/>
        <end position="441"/>
    </location>
</feature>
<feature type="disulfide bond" evidence="3">
    <location>
        <begin position="448"/>
        <end position="460"/>
    </location>
</feature>